<dbReference type="EC" id="4.2.1.19" evidence="1"/>
<dbReference type="EMBL" id="CP000127">
    <property type="protein sequence ID" value="ABA59492.1"/>
    <property type="molecule type" value="Genomic_DNA"/>
</dbReference>
<dbReference type="RefSeq" id="WP_002812998.1">
    <property type="nucleotide sequence ID" value="NC_007484.1"/>
</dbReference>
<dbReference type="SMR" id="Q3J6Q4"/>
<dbReference type="FunCoup" id="Q3J6Q4">
    <property type="interactions" value="391"/>
</dbReference>
<dbReference type="STRING" id="323261.Noc_3051"/>
<dbReference type="KEGG" id="noc:Noc_3051"/>
<dbReference type="eggNOG" id="COG0131">
    <property type="taxonomic scope" value="Bacteria"/>
</dbReference>
<dbReference type="HOGENOM" id="CLU_044308_3_0_6"/>
<dbReference type="InParanoid" id="Q3J6Q4"/>
<dbReference type="UniPathway" id="UPA00031">
    <property type="reaction ID" value="UER00011"/>
</dbReference>
<dbReference type="Proteomes" id="UP000006838">
    <property type="component" value="Chromosome"/>
</dbReference>
<dbReference type="GO" id="GO:0005737">
    <property type="term" value="C:cytoplasm"/>
    <property type="evidence" value="ECO:0007669"/>
    <property type="project" value="UniProtKB-SubCell"/>
</dbReference>
<dbReference type="GO" id="GO:0004424">
    <property type="term" value="F:imidazoleglycerol-phosphate dehydratase activity"/>
    <property type="evidence" value="ECO:0007669"/>
    <property type="project" value="UniProtKB-UniRule"/>
</dbReference>
<dbReference type="GO" id="GO:0000105">
    <property type="term" value="P:L-histidine biosynthetic process"/>
    <property type="evidence" value="ECO:0007669"/>
    <property type="project" value="UniProtKB-UniRule"/>
</dbReference>
<dbReference type="CDD" id="cd07914">
    <property type="entry name" value="IGPD"/>
    <property type="match status" value="1"/>
</dbReference>
<dbReference type="FunFam" id="3.30.230.40:FF:000002">
    <property type="entry name" value="Imidazoleglycerol-phosphate dehydratase"/>
    <property type="match status" value="1"/>
</dbReference>
<dbReference type="FunFam" id="3.30.230.40:FF:000003">
    <property type="entry name" value="Imidazoleglycerol-phosphate dehydratase HisB"/>
    <property type="match status" value="1"/>
</dbReference>
<dbReference type="Gene3D" id="3.30.230.40">
    <property type="entry name" value="Imidazole glycerol phosphate dehydratase, domain 1"/>
    <property type="match status" value="2"/>
</dbReference>
<dbReference type="HAMAP" id="MF_00076">
    <property type="entry name" value="HisB"/>
    <property type="match status" value="1"/>
</dbReference>
<dbReference type="InterPro" id="IPR038494">
    <property type="entry name" value="IGPD_sf"/>
</dbReference>
<dbReference type="InterPro" id="IPR000807">
    <property type="entry name" value="ImidazoleglycerolP_deHydtase"/>
</dbReference>
<dbReference type="InterPro" id="IPR020565">
    <property type="entry name" value="ImidazoleglycerP_deHydtase_CS"/>
</dbReference>
<dbReference type="InterPro" id="IPR020568">
    <property type="entry name" value="Ribosomal_Su5_D2-typ_SF"/>
</dbReference>
<dbReference type="NCBIfam" id="NF002106">
    <property type="entry name" value="PRK00951.1-1"/>
    <property type="match status" value="1"/>
</dbReference>
<dbReference type="NCBIfam" id="NF002109">
    <property type="entry name" value="PRK00951.1-5"/>
    <property type="match status" value="1"/>
</dbReference>
<dbReference type="NCBIfam" id="NF002111">
    <property type="entry name" value="PRK00951.2-1"/>
    <property type="match status" value="1"/>
</dbReference>
<dbReference type="NCBIfam" id="NF002114">
    <property type="entry name" value="PRK00951.2-4"/>
    <property type="match status" value="1"/>
</dbReference>
<dbReference type="PANTHER" id="PTHR23133:SF2">
    <property type="entry name" value="IMIDAZOLEGLYCEROL-PHOSPHATE DEHYDRATASE"/>
    <property type="match status" value="1"/>
</dbReference>
<dbReference type="PANTHER" id="PTHR23133">
    <property type="entry name" value="IMIDAZOLEGLYCEROL-PHOSPHATE DEHYDRATASE HIS7"/>
    <property type="match status" value="1"/>
</dbReference>
<dbReference type="Pfam" id="PF00475">
    <property type="entry name" value="IGPD"/>
    <property type="match status" value="1"/>
</dbReference>
<dbReference type="SUPFAM" id="SSF54211">
    <property type="entry name" value="Ribosomal protein S5 domain 2-like"/>
    <property type="match status" value="2"/>
</dbReference>
<dbReference type="PROSITE" id="PS00954">
    <property type="entry name" value="IGP_DEHYDRATASE_1"/>
    <property type="match status" value="1"/>
</dbReference>
<dbReference type="PROSITE" id="PS00955">
    <property type="entry name" value="IGP_DEHYDRATASE_2"/>
    <property type="match status" value="1"/>
</dbReference>
<protein>
    <recommendedName>
        <fullName evidence="1">Imidazoleglycerol-phosphate dehydratase</fullName>
        <shortName evidence="1">IGPD</shortName>
        <ecNumber evidence="1">4.2.1.19</ecNumber>
    </recommendedName>
</protein>
<sequence length="197" mass="21977">MSNYTATVYRETLETRVEVDLNLSGEGHFTAETGLPFLEHMLAQVARHGLLDLTVKASGDLHIDAHHTVEDIGITLGQALQQALGDKTGLQRYGYAYVPLDEALSRVVLDLSGRPSLHYRVNYPRARIGDFDVDLFQEFFQGLVNHAAMTLHIDNLHGRNAHHIAETIFKAFGRALRVAVEYDPRRKGQLASTKGML</sequence>
<gene>
    <name evidence="1" type="primary">hisB</name>
    <name type="ordered locus">Noc_3051</name>
</gene>
<name>HIS7_NITOC</name>
<proteinExistence type="inferred from homology"/>
<feature type="chain" id="PRO_1000010312" description="Imidazoleglycerol-phosphate dehydratase">
    <location>
        <begin position="1"/>
        <end position="197"/>
    </location>
</feature>
<reference key="1">
    <citation type="journal article" date="2006" name="Appl. Environ. Microbiol.">
        <title>Complete genome sequence of the marine, chemolithoautotrophic, ammonia-oxidizing bacterium Nitrosococcus oceani ATCC 19707.</title>
        <authorList>
            <person name="Klotz M.G."/>
            <person name="Arp D.J."/>
            <person name="Chain P.S.G."/>
            <person name="El-Sheikh A.F."/>
            <person name="Hauser L.J."/>
            <person name="Hommes N.G."/>
            <person name="Larimer F.W."/>
            <person name="Malfatti S.A."/>
            <person name="Norton J.M."/>
            <person name="Poret-Peterson A.T."/>
            <person name="Vergez L.M."/>
            <person name="Ward B.B."/>
        </authorList>
    </citation>
    <scope>NUCLEOTIDE SEQUENCE [LARGE SCALE GENOMIC DNA]</scope>
    <source>
        <strain>ATCC 19707 / BCRC 17464 / JCM 30415 / NCIMB 11848 / C-107</strain>
    </source>
</reference>
<organism>
    <name type="scientific">Nitrosococcus oceani (strain ATCC 19707 / BCRC 17464 / JCM 30415 / NCIMB 11848 / C-107)</name>
    <dbReference type="NCBI Taxonomy" id="323261"/>
    <lineage>
        <taxon>Bacteria</taxon>
        <taxon>Pseudomonadati</taxon>
        <taxon>Pseudomonadota</taxon>
        <taxon>Gammaproteobacteria</taxon>
        <taxon>Chromatiales</taxon>
        <taxon>Chromatiaceae</taxon>
        <taxon>Nitrosococcus</taxon>
    </lineage>
</organism>
<keyword id="KW-0028">Amino-acid biosynthesis</keyword>
<keyword id="KW-0963">Cytoplasm</keyword>
<keyword id="KW-0368">Histidine biosynthesis</keyword>
<keyword id="KW-0456">Lyase</keyword>
<keyword id="KW-1185">Reference proteome</keyword>
<evidence type="ECO:0000255" key="1">
    <source>
        <dbReference type="HAMAP-Rule" id="MF_00076"/>
    </source>
</evidence>
<accession>Q3J6Q4</accession>
<comment type="catalytic activity">
    <reaction evidence="1">
        <text>D-erythro-1-(imidazol-4-yl)glycerol 3-phosphate = 3-(imidazol-4-yl)-2-oxopropyl phosphate + H2O</text>
        <dbReference type="Rhea" id="RHEA:11040"/>
        <dbReference type="ChEBI" id="CHEBI:15377"/>
        <dbReference type="ChEBI" id="CHEBI:57766"/>
        <dbReference type="ChEBI" id="CHEBI:58278"/>
        <dbReference type="EC" id="4.2.1.19"/>
    </reaction>
</comment>
<comment type="pathway">
    <text evidence="1">Amino-acid biosynthesis; L-histidine biosynthesis; L-histidine from 5-phospho-alpha-D-ribose 1-diphosphate: step 6/9.</text>
</comment>
<comment type="subcellular location">
    <subcellularLocation>
        <location evidence="1">Cytoplasm</location>
    </subcellularLocation>
</comment>
<comment type="similarity">
    <text evidence="1">Belongs to the imidazoleglycerol-phosphate dehydratase family.</text>
</comment>